<keyword id="KW-0025">Alternative splicing</keyword>
<keyword id="KW-0175">Coiled coil</keyword>
<keyword id="KW-0963">Cytoplasm</keyword>
<keyword id="KW-1185">Reference proteome</keyword>
<keyword id="KW-0677">Repeat</keyword>
<reference key="1">
    <citation type="journal article" date="2005" name="Mol. Biol. Evol.">
        <title>A novel gene family NBPF: intricate structure generated by gene duplications during primate evolution.</title>
        <authorList>
            <person name="Vandepoele K."/>
            <person name="Van Roy N."/>
            <person name="Staes K."/>
            <person name="Speleman F."/>
            <person name="van Roy F."/>
        </authorList>
    </citation>
    <scope>NUCLEOTIDE SEQUENCE [MRNA] (ISOFORM 2)</scope>
    <scope>TISSUE SPECIFICITY</scope>
</reference>
<reference key="2">
    <citation type="journal article" date="2006" name="Nature">
        <title>The DNA sequence and biological annotation of human chromosome 1.</title>
        <authorList>
            <person name="Gregory S.G."/>
            <person name="Barlow K.F."/>
            <person name="McLay K.E."/>
            <person name="Kaul R."/>
            <person name="Swarbreck D."/>
            <person name="Dunham A."/>
            <person name="Scott C.E."/>
            <person name="Howe K.L."/>
            <person name="Woodfine K."/>
            <person name="Spencer C.C.A."/>
            <person name="Jones M.C."/>
            <person name="Gillson C."/>
            <person name="Searle S."/>
            <person name="Zhou Y."/>
            <person name="Kokocinski F."/>
            <person name="McDonald L."/>
            <person name="Evans R."/>
            <person name="Phillips K."/>
            <person name="Atkinson A."/>
            <person name="Cooper R."/>
            <person name="Jones C."/>
            <person name="Hall R.E."/>
            <person name="Andrews T.D."/>
            <person name="Lloyd C."/>
            <person name="Ainscough R."/>
            <person name="Almeida J.P."/>
            <person name="Ambrose K.D."/>
            <person name="Anderson F."/>
            <person name="Andrew R.W."/>
            <person name="Ashwell R.I.S."/>
            <person name="Aubin K."/>
            <person name="Babbage A.K."/>
            <person name="Bagguley C.L."/>
            <person name="Bailey J."/>
            <person name="Beasley H."/>
            <person name="Bethel G."/>
            <person name="Bird C.P."/>
            <person name="Bray-Allen S."/>
            <person name="Brown J.Y."/>
            <person name="Brown A.J."/>
            <person name="Buckley D."/>
            <person name="Burton J."/>
            <person name="Bye J."/>
            <person name="Carder C."/>
            <person name="Chapman J.C."/>
            <person name="Clark S.Y."/>
            <person name="Clarke G."/>
            <person name="Clee C."/>
            <person name="Cobley V."/>
            <person name="Collier R.E."/>
            <person name="Corby N."/>
            <person name="Coville G.J."/>
            <person name="Davies J."/>
            <person name="Deadman R."/>
            <person name="Dunn M."/>
            <person name="Earthrowl M."/>
            <person name="Ellington A.G."/>
            <person name="Errington H."/>
            <person name="Frankish A."/>
            <person name="Frankland J."/>
            <person name="French L."/>
            <person name="Garner P."/>
            <person name="Garnett J."/>
            <person name="Gay L."/>
            <person name="Ghori M.R.J."/>
            <person name="Gibson R."/>
            <person name="Gilby L.M."/>
            <person name="Gillett W."/>
            <person name="Glithero R.J."/>
            <person name="Grafham D.V."/>
            <person name="Griffiths C."/>
            <person name="Griffiths-Jones S."/>
            <person name="Grocock R."/>
            <person name="Hammond S."/>
            <person name="Harrison E.S.I."/>
            <person name="Hart E."/>
            <person name="Haugen E."/>
            <person name="Heath P.D."/>
            <person name="Holmes S."/>
            <person name="Holt K."/>
            <person name="Howden P.J."/>
            <person name="Hunt A.R."/>
            <person name="Hunt S.E."/>
            <person name="Hunter G."/>
            <person name="Isherwood J."/>
            <person name="James R."/>
            <person name="Johnson C."/>
            <person name="Johnson D."/>
            <person name="Joy A."/>
            <person name="Kay M."/>
            <person name="Kershaw J.K."/>
            <person name="Kibukawa M."/>
            <person name="Kimberley A.M."/>
            <person name="King A."/>
            <person name="Knights A.J."/>
            <person name="Lad H."/>
            <person name="Laird G."/>
            <person name="Lawlor S."/>
            <person name="Leongamornlert D.A."/>
            <person name="Lloyd D.M."/>
            <person name="Loveland J."/>
            <person name="Lovell J."/>
            <person name="Lush M.J."/>
            <person name="Lyne R."/>
            <person name="Martin S."/>
            <person name="Mashreghi-Mohammadi M."/>
            <person name="Matthews L."/>
            <person name="Matthews N.S.W."/>
            <person name="McLaren S."/>
            <person name="Milne S."/>
            <person name="Mistry S."/>
            <person name="Moore M.J.F."/>
            <person name="Nickerson T."/>
            <person name="O'Dell C.N."/>
            <person name="Oliver K."/>
            <person name="Palmeiri A."/>
            <person name="Palmer S.A."/>
            <person name="Parker A."/>
            <person name="Patel D."/>
            <person name="Pearce A.V."/>
            <person name="Peck A.I."/>
            <person name="Pelan S."/>
            <person name="Phelps K."/>
            <person name="Phillimore B.J."/>
            <person name="Plumb R."/>
            <person name="Rajan J."/>
            <person name="Raymond C."/>
            <person name="Rouse G."/>
            <person name="Saenphimmachak C."/>
            <person name="Sehra H.K."/>
            <person name="Sheridan E."/>
            <person name="Shownkeen R."/>
            <person name="Sims S."/>
            <person name="Skuce C.D."/>
            <person name="Smith M."/>
            <person name="Steward C."/>
            <person name="Subramanian S."/>
            <person name="Sycamore N."/>
            <person name="Tracey A."/>
            <person name="Tromans A."/>
            <person name="Van Helmond Z."/>
            <person name="Wall M."/>
            <person name="Wallis J.M."/>
            <person name="White S."/>
            <person name="Whitehead S.L."/>
            <person name="Wilkinson J.E."/>
            <person name="Willey D.L."/>
            <person name="Williams H."/>
            <person name="Wilming L."/>
            <person name="Wray P.W."/>
            <person name="Wu Z."/>
            <person name="Coulson A."/>
            <person name="Vaudin M."/>
            <person name="Sulston J.E."/>
            <person name="Durbin R.M."/>
            <person name="Hubbard T."/>
            <person name="Wooster R."/>
            <person name="Dunham I."/>
            <person name="Carter N.P."/>
            <person name="McVean G."/>
            <person name="Ross M.T."/>
            <person name="Harrow J."/>
            <person name="Olson M.V."/>
            <person name="Beck S."/>
            <person name="Rogers J."/>
            <person name="Bentley D.R."/>
        </authorList>
    </citation>
    <scope>NUCLEOTIDE SEQUENCE [LARGE SCALE GENOMIC DNA]</scope>
</reference>
<proteinExistence type="evidence at transcript level"/>
<protein>
    <recommendedName>
        <fullName evidence="6">NBPF family member NBPF9</fullName>
    </recommendedName>
    <alternativeName>
        <fullName>Neuroblastoma breakpoint family member 9</fullName>
    </alternativeName>
</protein>
<organism>
    <name type="scientific">Homo sapiens</name>
    <name type="common">Human</name>
    <dbReference type="NCBI Taxonomy" id="9606"/>
    <lineage>
        <taxon>Eukaryota</taxon>
        <taxon>Metazoa</taxon>
        <taxon>Chordata</taxon>
        <taxon>Craniata</taxon>
        <taxon>Vertebrata</taxon>
        <taxon>Euteleostomi</taxon>
        <taxon>Mammalia</taxon>
        <taxon>Eutheria</taxon>
        <taxon>Euarchontoglires</taxon>
        <taxon>Primates</taxon>
        <taxon>Haplorrhini</taxon>
        <taxon>Catarrhini</taxon>
        <taxon>Hominidae</taxon>
        <taxon>Homo</taxon>
    </lineage>
</organism>
<name>NBPF9_HUMAN</name>
<accession>P0DPF3</accession>
<accession>A0A075B761</accession>
<accession>A0A087WVA0</accession>
<accession>A0A087WY26</accession>
<accession>Q3BBV1</accession>
<accession>Q3BBW0</accession>
<dbReference type="EMBL" id="AY894574">
    <property type="protein sequence ID" value="AAX85113.1"/>
    <property type="molecule type" value="mRNA"/>
</dbReference>
<dbReference type="EMBL" id="AC239804">
    <property type="status" value="NOT_ANNOTATED_CDS"/>
    <property type="molecule type" value="Genomic_DNA"/>
</dbReference>
<dbReference type="CCDS" id="CCDS72895.1">
    <molecule id="P0DPF3-2"/>
</dbReference>
<dbReference type="CCDS" id="CCDS72896.1">
    <molecule id="P0DPF3-1"/>
</dbReference>
<dbReference type="RefSeq" id="NP_001032764.2">
    <molecule id="P0DPF3-2"/>
    <property type="nucleotide sequence ID" value="NM_001037675.4"/>
</dbReference>
<dbReference type="RefSeq" id="NP_001264373.1">
    <molecule id="P0DPF3-1"/>
    <property type="nucleotide sequence ID" value="NM_001277444.2"/>
</dbReference>
<dbReference type="RefSeq" id="NP_001375295.1">
    <molecule id="P0DPF3-1"/>
    <property type="nucleotide sequence ID" value="NM_001388366.1"/>
</dbReference>
<dbReference type="RefSeq" id="NP_001375296.1">
    <molecule id="P0DPF3-1"/>
    <property type="nucleotide sequence ID" value="NM_001388367.1"/>
</dbReference>
<dbReference type="RefSeq" id="NP_001375297.1">
    <molecule id="P0DPF3-1"/>
    <property type="nucleotide sequence ID" value="NM_001388368.1"/>
</dbReference>
<dbReference type="RefSeq" id="NP_001375298.1">
    <molecule id="P0DPF3-1"/>
    <property type="nucleotide sequence ID" value="NM_001388369.1"/>
</dbReference>
<dbReference type="RefSeq" id="NP_001375299.1">
    <molecule id="P0DPF3-1"/>
    <property type="nucleotide sequence ID" value="NM_001388370.1"/>
</dbReference>
<dbReference type="RefSeq" id="NP_001375301.1">
    <molecule id="P0DPF3-2"/>
    <property type="nucleotide sequence ID" value="NM_001388372.1"/>
</dbReference>
<dbReference type="RefSeq" id="NP_001375302.1">
    <molecule id="P0DPF3-2"/>
    <property type="nucleotide sequence ID" value="NM_001388373.1"/>
</dbReference>
<dbReference type="RefSeq" id="NP_001375303.1">
    <molecule id="P0DPF3-2"/>
    <property type="nucleotide sequence ID" value="NM_001388374.1"/>
</dbReference>
<dbReference type="RefSeq" id="NP_001375304.1">
    <molecule id="P0DPF3-2"/>
    <property type="nucleotide sequence ID" value="NM_001388375.1"/>
</dbReference>
<dbReference type="RefSeq" id="NP_001375305.1">
    <molecule id="P0DPF3-2"/>
    <property type="nucleotide sequence ID" value="NM_001388376.1"/>
</dbReference>
<dbReference type="RefSeq" id="NP_001375306.1">
    <molecule id="P0DPF3-2"/>
    <property type="nucleotide sequence ID" value="NM_001388377.1"/>
</dbReference>
<dbReference type="RefSeq" id="NP_001375307.1">
    <molecule id="P0DPF3-2"/>
    <property type="nucleotide sequence ID" value="NM_001388378.1"/>
</dbReference>
<dbReference type="RefSeq" id="NP_001375308.1">
    <molecule id="P0DPF3-2"/>
    <property type="nucleotide sequence ID" value="NM_001388379.1"/>
</dbReference>
<dbReference type="RefSeq" id="NP_001375310.1">
    <molecule id="P0DPF3-2"/>
    <property type="nucleotide sequence ID" value="NM_001388381.1"/>
</dbReference>
<dbReference type="RefSeq" id="NP_001375311.1">
    <molecule id="P0DPF3-2"/>
    <property type="nucleotide sequence ID" value="NM_001388382.1"/>
</dbReference>
<dbReference type="RefSeq" id="NP_001375312.1">
    <molecule id="P0DPF3-2"/>
    <property type="nucleotide sequence ID" value="NM_001388383.1"/>
</dbReference>
<dbReference type="RefSeq" id="NP_001375313.1">
    <molecule id="P0DPF3-2"/>
    <property type="nucleotide sequence ID" value="NM_001388384.1"/>
</dbReference>
<dbReference type="RefSeq" id="XP_006711380.1">
    <property type="nucleotide sequence ID" value="XM_006711317.2"/>
</dbReference>
<dbReference type="RefSeq" id="XP_047276528.1">
    <molecule id="P0DPF3-1"/>
    <property type="nucleotide sequence ID" value="XM_047420572.1"/>
</dbReference>
<dbReference type="SMR" id="P0DPF3"/>
<dbReference type="STRING" id="9606.ENSP00000477979"/>
<dbReference type="GlyGen" id="P0DPF3">
    <property type="glycosylation" value="2 sites"/>
</dbReference>
<dbReference type="iPTMnet" id="P0DPF3"/>
<dbReference type="PhosphoSitePlus" id="P0DPF3"/>
<dbReference type="jPOST" id="P0DPF3"/>
<dbReference type="MassIVE" id="P0DPF3"/>
<dbReference type="PaxDb" id="9606-ENSP00000477979"/>
<dbReference type="PeptideAtlas" id="P0DPF3"/>
<dbReference type="Antibodypedia" id="73769">
    <property type="antibodies" value="33 antibodies from 6 providers"/>
</dbReference>
<dbReference type="DNASU" id="400818"/>
<dbReference type="Ensembl" id="ENST00000610300.4">
    <molecule id="P0DPF3-2"/>
    <property type="protein sequence ID" value="ENSP00000481471.1"/>
    <property type="gene ID" value="ENSG00000269713.9"/>
</dbReference>
<dbReference type="Ensembl" id="ENST00000613595.4">
    <molecule id="P0DPF3-2"/>
    <property type="protein sequence ID" value="ENSP00000483900.1"/>
    <property type="gene ID" value="ENSG00000269713.9"/>
</dbReference>
<dbReference type="Ensembl" id="ENST00000615421.4">
    <molecule id="P0DPF3-1"/>
    <property type="protein sequence ID" value="ENSP00000477979.1"/>
    <property type="gene ID" value="ENSG00000269713.9"/>
</dbReference>
<dbReference type="Ensembl" id="ENST00000698196.1">
    <molecule id="P0DPF3-1"/>
    <property type="protein sequence ID" value="ENSP00000513601.1"/>
    <property type="gene ID" value="ENSG00000269713.9"/>
</dbReference>
<dbReference type="Ensembl" id="ENST00000698832.1">
    <molecule id="P0DPF3-1"/>
    <property type="protein sequence ID" value="ENSP00000513968.1"/>
    <property type="gene ID" value="ENSG00000269713.9"/>
</dbReference>
<dbReference type="GeneID" id="400818"/>
<dbReference type="KEGG" id="hsa:400818"/>
<dbReference type="MANE-Select" id="ENST00000698832.1">
    <property type="protein sequence ID" value="ENSP00000513968.1"/>
    <property type="RefSeq nucleotide sequence ID" value="NM_001388367.1"/>
    <property type="RefSeq protein sequence ID" value="NP_001375296.1"/>
</dbReference>
<dbReference type="AGR" id="HGNC:31991"/>
<dbReference type="CTD" id="400818"/>
<dbReference type="DisGeNET" id="400818"/>
<dbReference type="GeneCards" id="NBPF9"/>
<dbReference type="HGNC" id="HGNC:31991">
    <property type="gene designation" value="NBPF9"/>
</dbReference>
<dbReference type="HPA" id="ENSG00000269713">
    <property type="expression patterns" value="Low tissue specificity"/>
</dbReference>
<dbReference type="MIM" id="613999">
    <property type="type" value="gene"/>
</dbReference>
<dbReference type="neXtProt" id="NX_P0DPF3"/>
<dbReference type="OpenTargets" id="ENSG00000269713"/>
<dbReference type="VEuPathDB" id="HostDB:ENSG00000269713"/>
<dbReference type="GeneTree" id="ENSGT00420000029746"/>
<dbReference type="InParanoid" id="P0DPF3"/>
<dbReference type="OrthoDB" id="9470178at2759"/>
<dbReference type="PAN-GO" id="P0DPF3">
    <property type="GO annotations" value="0 GO annotations based on evolutionary models"/>
</dbReference>
<dbReference type="PathwayCommons" id="P0DPF3"/>
<dbReference type="ChiTaRS" id="NBPF9">
    <property type="organism name" value="human"/>
</dbReference>
<dbReference type="Pharos" id="P0DPF3">
    <property type="development level" value="Tdark"/>
</dbReference>
<dbReference type="PRO" id="PR:P0DPF3"/>
<dbReference type="Proteomes" id="UP000005640">
    <property type="component" value="Chromosome 1"/>
</dbReference>
<dbReference type="Bgee" id="ENSG00000269713">
    <property type="expression patterns" value="Expressed in sural nerve and 98 other cell types or tissues"/>
</dbReference>
<dbReference type="ExpressionAtlas" id="P0DPF3">
    <property type="expression patterns" value="baseline and differential"/>
</dbReference>
<dbReference type="GO" id="GO:0005737">
    <property type="term" value="C:cytoplasm"/>
    <property type="evidence" value="ECO:0007669"/>
    <property type="project" value="UniProtKB-SubCell"/>
</dbReference>
<dbReference type="InterPro" id="IPR055306">
    <property type="entry name" value="NBPF"/>
</dbReference>
<dbReference type="InterPro" id="IPR010630">
    <property type="entry name" value="Olduvai_dom"/>
</dbReference>
<dbReference type="PANTHER" id="PTHR14199:SF35">
    <property type="entry name" value="NEUROBLASTOMA BREAKPOINT FAMILY MEMBER 1-RELATED"/>
    <property type="match status" value="1"/>
</dbReference>
<dbReference type="PANTHER" id="PTHR14199">
    <property type="entry name" value="NEUROBLASTOMA BREAKPOINT FAMILY MEMBER 6-LIKE PROTEIN"/>
    <property type="match status" value="1"/>
</dbReference>
<dbReference type="Pfam" id="PF06758">
    <property type="entry name" value="Olduvai"/>
    <property type="match status" value="9"/>
</dbReference>
<dbReference type="SMART" id="SM01148">
    <property type="entry name" value="DUF1220"/>
    <property type="match status" value="9"/>
</dbReference>
<dbReference type="PROSITE" id="PS51316">
    <property type="entry name" value="ODV"/>
    <property type="match status" value="9"/>
</dbReference>
<sequence>MVVSAGPWSSEKAEMNILEINEKLRPQLAENKQQFGNLKERCFLTQLAGFLANRQKKYKYEECKDLIKFMLRNERQFKEEKLAEQLKQAEELRQYKVLVHSQERELTQLKEKLREGRDASRSLNEHLQALLTPDEPDKSQGQDLQEQLAEGCRLAQHLVQKLSPENDEDEDEDVQVEEDEKVLESSAPREVQKAEESKVAEDSLEECAITCSNSHGPCDSNQPHKNIKITFEEDEVNSTLVVDRESSHDECQDALNILPVPGPTSSATNVSMVVSAGPLSSEKAEMNILEINEKLRPQLAEKKQQFRNLKEKCFLTQLAGFLANQQNKYKYEECKDLIKFMLRNERQFKEEKLAEQLKQAEELRQYKVLVHAQERELTQLREKLREGRDASRSLNEHLQALLTPDEPDKSQGQDLQEQLAEGCRLAQHLVQKLSPENDNDDDEDVQIEVAEKVQKSSAPREMQKAEEKEVPEDSLEECAITYSNSHGPYDSNQPHRKTKITFEEDKVDSTLIGSSSHVEREDAVHIIPENESDDEEEEEKGPVSPRNLQESEEEEVPQESWDEGYSTPSIPPEMLASYKSYSSTFHSLEEQQVCMAVDIGRHRWDQVKKEDQEATGPRLSRELLDEKGPEVLQDSLDRCYSTPSGCLELTDSCQPYRSAFYVLEQQRVGLAVDMDEIEKYQEVEEDQDPSCPRLSRELLDEKEPEVLQDSLGRWYSTPSGYLELPDLGQPYSSAVYSLEEQYLGLALDLDRIKKDQEEEEDQGPPCPRLSRELLEVVEPEVLQDSLDRCYSTPSSCLEQPDSCQPYGSSFYALEEKHVGFSLDVGEIEKKGKGKKRRGRRSKKKRRRGRKEGEENQNPPCPRLSRELLDEKEPEVLQDSLDRCYSTPSGYLELPDLGQPYSSAVYSLEEQYLGLALDVDRIKKDQEEEEDQGPPCPRLSRELLEVVEPEVLQDSLDRCYSTPSSCLEQPDSCQPYGSSFYALEEKHVGFSLDVGEIEKKGKGKKRRGRRSKKERRRGRKEGEEDQNPPCPRLNGVLMEVEEPEVLQDSLDGCYSTPSMYFELPDSFQHYRSVFYSFEEQHISFALYVDNRFFTLTVTSLHLVFQMEVIFPQ</sequence>
<comment type="subcellular location">
    <subcellularLocation>
        <location evidence="6">Cytoplasm</location>
    </subcellularLocation>
</comment>
<comment type="alternative products">
    <event type="alternative splicing"/>
    <isoform>
        <id>P0DPF3-1</id>
        <name>1</name>
        <sequence type="displayed"/>
    </isoform>
    <isoform>
        <id>P0DPF3-2</id>
        <name>2</name>
        <sequence type="described" ref="VSP_059364"/>
    </isoform>
</comment>
<comment type="tissue specificity">
    <text evidence="4">Expressed in a neuroblastoma cell line.</text>
</comment>
<comment type="miscellaneous">
    <text>Encoded by one of the numerous copies of NBPF genes clustered in the p36, p12 and q21 region of the chromosome 1.</text>
</comment>
<comment type="similarity">
    <text evidence="6">Belongs to the NBPF family.</text>
</comment>
<feature type="chain" id="PRO_0000288044" description="NBPF family member NBPF9">
    <location>
        <begin position="1"/>
        <end position="1111"/>
    </location>
</feature>
<feature type="domain" description="Olduvai 1" evidence="2">
    <location>
        <begin position="165"/>
        <end position="259"/>
    </location>
</feature>
<feature type="domain" description="Olduvai 2" evidence="2">
    <location>
        <begin position="436"/>
        <end position="528"/>
    </location>
</feature>
<feature type="domain" description="Olduvai 3" evidence="2">
    <location>
        <begin position="529"/>
        <end position="600"/>
    </location>
</feature>
<feature type="domain" description="Olduvai 4" evidence="2">
    <location>
        <begin position="601"/>
        <end position="692"/>
    </location>
</feature>
<feature type="domain" description="Olduvai 5" evidence="2">
    <location>
        <begin position="695"/>
        <end position="750"/>
    </location>
</feature>
<feature type="domain" description="Olduvai 6" evidence="2">
    <location>
        <begin position="751"/>
        <end position="843"/>
    </location>
</feature>
<feature type="domain" description="Olduvai 7" evidence="2">
    <location>
        <begin position="844"/>
        <end position="919"/>
    </location>
</feature>
<feature type="domain" description="Olduvai 8" evidence="2">
    <location>
        <begin position="920"/>
        <end position="1012"/>
    </location>
</feature>
<feature type="domain" description="Olduvai 9" evidence="2">
    <location>
        <begin position="1013"/>
        <end position="1111"/>
    </location>
</feature>
<feature type="region of interest" description="Disordered" evidence="3">
    <location>
        <begin position="161"/>
        <end position="198"/>
    </location>
</feature>
<feature type="region of interest" description="Disordered" evidence="3">
    <location>
        <begin position="451"/>
        <end position="474"/>
    </location>
</feature>
<feature type="region of interest" description="Disordered" evidence="3">
    <location>
        <begin position="510"/>
        <end position="569"/>
    </location>
</feature>
<feature type="region of interest" description="Disordered" evidence="3">
    <location>
        <begin position="829"/>
        <end position="871"/>
    </location>
</feature>
<feature type="region of interest" description="Disordered" evidence="3">
    <location>
        <begin position="999"/>
        <end position="1033"/>
    </location>
</feature>
<feature type="coiled-coil region" evidence="1">
    <location>
        <begin position="70"/>
        <end position="130"/>
    </location>
</feature>
<feature type="coiled-coil region" evidence="1">
    <location>
        <begin position="341"/>
        <end position="401"/>
    </location>
</feature>
<feature type="compositionally biased region" description="Acidic residues" evidence="3">
    <location>
        <begin position="165"/>
        <end position="181"/>
    </location>
</feature>
<feature type="compositionally biased region" description="Acidic residues" evidence="3">
    <location>
        <begin position="530"/>
        <end position="539"/>
    </location>
</feature>
<feature type="compositionally biased region" description="Acidic residues" evidence="3">
    <location>
        <begin position="550"/>
        <end position="562"/>
    </location>
</feature>
<feature type="compositionally biased region" description="Basic residues" evidence="3">
    <location>
        <begin position="831"/>
        <end position="849"/>
    </location>
</feature>
<feature type="compositionally biased region" description="Basic residues" evidence="3">
    <location>
        <begin position="1000"/>
        <end position="1018"/>
    </location>
</feature>
<feature type="splice variant" id="VSP_059364" description="In isoform 2." evidence="5">
    <location>
        <begin position="765"/>
        <end position="933"/>
    </location>
</feature>
<feature type="sequence conflict" description="In Ref. 1; AAX85113." evidence="6" ref="1">
    <original>S</original>
    <variation>P</variation>
    <location>
        <position position="186"/>
    </location>
</feature>
<feature type="sequence conflict" description="In Ref. 1; AAX85113." evidence="6" ref="1">
    <original>A</original>
    <variation>T</variation>
    <location>
        <position position="200"/>
    </location>
</feature>
<feature type="sequence conflict" description="In Ref. 1; AAX85113." evidence="6" ref="1">
    <original>D</original>
    <variation>N</variation>
    <location>
        <position position="442"/>
    </location>
</feature>
<feature type="sequence conflict" description="In Ref. 1; AAX85113." evidence="6" ref="1">
    <original>I</original>
    <variation>V</variation>
    <location>
        <position position="447"/>
    </location>
</feature>
<feature type="sequence conflict" description="In Ref. 1; AAX85113." evidence="6" ref="1">
    <original>D</original>
    <variation>Y</variation>
    <location>
        <position position="637"/>
    </location>
</feature>
<feature type="sequence conflict" description="In Ref. 1; AAX85113." evidence="6" ref="1">
    <original>L</original>
    <variation>P</variation>
    <location>
        <position position="722"/>
    </location>
</feature>
<feature type="sequence conflict" description="In Ref. 1; AAX85113." evidence="6" ref="1">
    <original>C</original>
    <variation>W</variation>
    <location>
        <position position="972"/>
    </location>
</feature>
<gene>
    <name evidence="7" type="primary">NBPF9</name>
</gene>
<evidence type="ECO:0000255" key="1"/>
<evidence type="ECO:0000255" key="2">
    <source>
        <dbReference type="PROSITE-ProRule" id="PRU00647"/>
    </source>
</evidence>
<evidence type="ECO:0000256" key="3">
    <source>
        <dbReference type="SAM" id="MobiDB-lite"/>
    </source>
</evidence>
<evidence type="ECO:0000269" key="4">
    <source>
    </source>
</evidence>
<evidence type="ECO:0000303" key="5">
    <source>
    </source>
</evidence>
<evidence type="ECO:0000305" key="6"/>
<evidence type="ECO:0000312" key="7">
    <source>
        <dbReference type="HGNC" id="HGNC:31991"/>
    </source>
</evidence>